<proteinExistence type="evidence at protein level"/>
<organism>
    <name type="scientific">Saccharomyces cerevisiae (strain ATCC 204508 / S288c)</name>
    <name type="common">Baker's yeast</name>
    <dbReference type="NCBI Taxonomy" id="559292"/>
    <lineage>
        <taxon>Eukaryota</taxon>
        <taxon>Fungi</taxon>
        <taxon>Dikarya</taxon>
        <taxon>Ascomycota</taxon>
        <taxon>Saccharomycotina</taxon>
        <taxon>Saccharomycetes</taxon>
        <taxon>Saccharomycetales</taxon>
        <taxon>Saccharomycetaceae</taxon>
        <taxon>Saccharomyces</taxon>
    </lineage>
</organism>
<name>COG5_YEAST</name>
<keyword id="KW-0333">Golgi apparatus</keyword>
<keyword id="KW-0472">Membrane</keyword>
<keyword id="KW-0653">Protein transport</keyword>
<keyword id="KW-1185">Reference proteome</keyword>
<keyword id="KW-0813">Transport</keyword>
<sequence>MTIAPMANDLEDFESLLEPDFDAKQFGNDLLKATNNNDTTILDLNTPLKKLNYDLHEIDSRIDQLMNSNPLEIIELIYKNEHVNSTIVGELKPSLGYMNMSYDRLKNQVLDPYERARKVQLALSKVYQTSFLLRGALLYIHLSNKLNALSKTAQLSTSTAINLASLHYQLEITLEENKNLKSLRKIKQLDQDIVSPNKRELITFLSLQMCKECLNSIKIKSNKEIISQLAYSLYLLSSQEFESAINKIVLSNVTMSSQILSKILNSIRMFPDAFNEVVEKGYNIYILETLLQNIKTDNVTNSSRSIAANKSRLGNLLSEYTSMKSKAGSGTPRDLFWSKVSSAFKKDFDISVNRGGPVGKSLLKNKDFIINTMKQSMKKSSDNSDYQSYLDVMLNSVSISLNK</sequence>
<reference key="1">
    <citation type="journal article" date="1995" name="Yeast">
        <title>The sequence of a 44 420 bp fragment located on the left arm of chromosome XIV from Saccharomyces cerevisiae.</title>
        <authorList>
            <person name="Bergez P."/>
            <person name="Doignon F."/>
            <person name="Crouzet M."/>
        </authorList>
    </citation>
    <scope>NUCLEOTIDE SEQUENCE [GENOMIC DNA]</scope>
    <source>
        <strain>S288c / FY1676</strain>
    </source>
</reference>
<reference key="2">
    <citation type="journal article" date="1996" name="Yeast">
        <authorList>
            <person name="Bergez P."/>
            <person name="Doignon F."/>
            <person name="Crouzet M."/>
        </authorList>
    </citation>
    <scope>ERRATUM OF PUBMED:8533472</scope>
</reference>
<reference key="3">
    <citation type="journal article" date="1997" name="Nature">
        <title>The nucleotide sequence of Saccharomyces cerevisiae chromosome XIV and its evolutionary implications.</title>
        <authorList>
            <person name="Philippsen P."/>
            <person name="Kleine K."/>
            <person name="Poehlmann R."/>
            <person name="Duesterhoeft A."/>
            <person name="Hamberg K."/>
            <person name="Hegemann J.H."/>
            <person name="Obermaier B."/>
            <person name="Urrestarazu L.A."/>
            <person name="Aert R."/>
            <person name="Albermann K."/>
            <person name="Altmann R."/>
            <person name="Andre B."/>
            <person name="Baladron V."/>
            <person name="Ballesta J.P.G."/>
            <person name="Becam A.-M."/>
            <person name="Beinhauer J.D."/>
            <person name="Boskovic J."/>
            <person name="Buitrago M.J."/>
            <person name="Bussereau F."/>
            <person name="Coster F."/>
            <person name="Crouzet M."/>
            <person name="D'Angelo M."/>
            <person name="Dal Pero F."/>
            <person name="De Antoni A."/>
            <person name="del Rey F."/>
            <person name="Doignon F."/>
            <person name="Domdey H."/>
            <person name="Dubois E."/>
            <person name="Fiedler T.A."/>
            <person name="Fleig U."/>
            <person name="Floeth M."/>
            <person name="Fritz C."/>
            <person name="Gaillardin C."/>
            <person name="Garcia-Cantalejo J.M."/>
            <person name="Glansdorff N."/>
            <person name="Goffeau A."/>
            <person name="Gueldener U."/>
            <person name="Herbert C.J."/>
            <person name="Heumann K."/>
            <person name="Heuss-Neitzel D."/>
            <person name="Hilbert H."/>
            <person name="Hinni K."/>
            <person name="Iraqui Houssaini I."/>
            <person name="Jacquet M."/>
            <person name="Jimenez A."/>
            <person name="Jonniaux J.-L."/>
            <person name="Karpfinger-Hartl L."/>
            <person name="Lanfranchi G."/>
            <person name="Lepingle A."/>
            <person name="Levesque H."/>
            <person name="Lyck R."/>
            <person name="Maftahi M."/>
            <person name="Mallet L."/>
            <person name="Maurer C.T.C."/>
            <person name="Messenguy F."/>
            <person name="Mewes H.-W."/>
            <person name="Moestl D."/>
            <person name="Nasr F."/>
            <person name="Nicaud J.-M."/>
            <person name="Niedenthal R.K."/>
            <person name="Pandolfo D."/>
            <person name="Pierard A."/>
            <person name="Piravandi E."/>
            <person name="Planta R.J."/>
            <person name="Pohl T.M."/>
            <person name="Purnelle B."/>
            <person name="Rebischung C."/>
            <person name="Remacha M.A."/>
            <person name="Revuelta J.L."/>
            <person name="Rinke M."/>
            <person name="Saiz J.E."/>
            <person name="Sartorello F."/>
            <person name="Scherens B."/>
            <person name="Sen-Gupta M."/>
            <person name="Soler-Mira A."/>
            <person name="Urbanus J.H.M."/>
            <person name="Valle G."/>
            <person name="Van Dyck L."/>
            <person name="Verhasselt P."/>
            <person name="Vierendeels F."/>
            <person name="Vissers S."/>
            <person name="Voet M."/>
            <person name="Volckaert G."/>
            <person name="Wach A."/>
            <person name="Wambutt R."/>
            <person name="Wedler H."/>
            <person name="Zollner A."/>
            <person name="Hani J."/>
        </authorList>
    </citation>
    <scope>NUCLEOTIDE SEQUENCE [LARGE SCALE GENOMIC DNA]</scope>
    <source>
        <strain>ATCC 204508 / S288c</strain>
    </source>
</reference>
<reference key="4">
    <citation type="journal article" date="2014" name="G3 (Bethesda)">
        <title>The reference genome sequence of Saccharomyces cerevisiae: Then and now.</title>
        <authorList>
            <person name="Engel S.R."/>
            <person name="Dietrich F.S."/>
            <person name="Fisk D.G."/>
            <person name="Binkley G."/>
            <person name="Balakrishnan R."/>
            <person name="Costanzo M.C."/>
            <person name="Dwight S.S."/>
            <person name="Hitz B.C."/>
            <person name="Karra K."/>
            <person name="Nash R.S."/>
            <person name="Weng S."/>
            <person name="Wong E.D."/>
            <person name="Lloyd P."/>
            <person name="Skrzypek M.S."/>
            <person name="Miyasato S.R."/>
            <person name="Simison M."/>
            <person name="Cherry J.M."/>
        </authorList>
    </citation>
    <scope>GENOME REANNOTATION</scope>
    <source>
        <strain>ATCC 204508 / S288c</strain>
    </source>
</reference>
<reference key="5">
    <citation type="journal article" date="2001" name="Dev. Cell">
        <title>The Sec34/35 Golgi transport complex is related to the exocyst, defining a family of complexes involved in multiple steps of membrane traffic.</title>
        <authorList>
            <person name="Whyte J.R."/>
            <person name="Munro S."/>
        </authorList>
    </citation>
    <scope>SUBUNIT</scope>
    <scope>FUNCTION</scope>
</reference>
<reference key="6">
    <citation type="journal article" date="2003" name="Nature">
        <title>Global analysis of protein expression in yeast.</title>
        <authorList>
            <person name="Ghaemmaghami S."/>
            <person name="Huh W.-K."/>
            <person name="Bower K."/>
            <person name="Howson R.W."/>
            <person name="Belle A."/>
            <person name="Dephoure N."/>
            <person name="O'Shea E.K."/>
            <person name="Weissman J.S."/>
        </authorList>
    </citation>
    <scope>LEVEL OF PROTEIN EXPRESSION [LARGE SCALE ANALYSIS]</scope>
</reference>
<reference key="7">
    <citation type="journal article" date="2004" name="J. Biol. Chem.">
        <title>The binary interacting network of the conserved oligomeric Golgi tethering complex.</title>
        <authorList>
            <person name="Loh E."/>
            <person name="Hong W."/>
        </authorList>
    </citation>
    <scope>COMPOSITION OF THE COG COMPLEX</scope>
    <scope>INTERACTION WITH COG4</scope>
</reference>
<protein>
    <recommendedName>
        <fullName>Conserved oligomeric Golgi complex subunit 5</fullName>
        <shortName>COG complex subunit 5</shortName>
    </recommendedName>
    <alternativeName>
        <fullName>Complexed with DOR1 protein 4</fullName>
    </alternativeName>
    <alternativeName>
        <fullName>Component of oligomeric Golgi complex 5</fullName>
    </alternativeName>
</protein>
<accession>P53951</accession>
<accession>D6W1C8</accession>
<dbReference type="EMBL" id="U12141">
    <property type="protein sequence ID" value="AAA99661.1"/>
    <property type="molecule type" value="Genomic_DNA"/>
</dbReference>
<dbReference type="EMBL" id="Z71327">
    <property type="protein sequence ID" value="CAA95920.1"/>
    <property type="molecule type" value="Genomic_DNA"/>
</dbReference>
<dbReference type="EMBL" id="BK006947">
    <property type="protein sequence ID" value="DAA10494.1"/>
    <property type="molecule type" value="Genomic_DNA"/>
</dbReference>
<dbReference type="PIR" id="S62979">
    <property type="entry name" value="S62979"/>
</dbReference>
<dbReference type="RefSeq" id="NP_014347.1">
    <property type="nucleotide sequence ID" value="NM_001182890.1"/>
</dbReference>
<dbReference type="SMR" id="P53951"/>
<dbReference type="BioGRID" id="35773">
    <property type="interactions" value="559"/>
</dbReference>
<dbReference type="ComplexPortal" id="CPX-1840">
    <property type="entry name" value="COG Golgi transport complex"/>
</dbReference>
<dbReference type="DIP" id="DIP-5711N"/>
<dbReference type="FunCoup" id="P53951">
    <property type="interactions" value="70"/>
</dbReference>
<dbReference type="IntAct" id="P53951">
    <property type="interactions" value="10"/>
</dbReference>
<dbReference type="MINT" id="P53951"/>
<dbReference type="STRING" id="4932.YNL051W"/>
<dbReference type="iPTMnet" id="P53951"/>
<dbReference type="PaxDb" id="4932-YNL051W"/>
<dbReference type="PeptideAtlas" id="P53951"/>
<dbReference type="EnsemblFungi" id="YNL051W_mRNA">
    <property type="protein sequence ID" value="YNL051W"/>
    <property type="gene ID" value="YNL051W"/>
</dbReference>
<dbReference type="GeneID" id="855676"/>
<dbReference type="KEGG" id="sce:YNL051W"/>
<dbReference type="AGR" id="SGD:S000004996"/>
<dbReference type="SGD" id="S000004996">
    <property type="gene designation" value="COG5"/>
</dbReference>
<dbReference type="VEuPathDB" id="FungiDB:YNL051W"/>
<dbReference type="eggNOG" id="ENOG502QQP3">
    <property type="taxonomic scope" value="Eukaryota"/>
</dbReference>
<dbReference type="GeneTree" id="ENSGT00390000004586"/>
<dbReference type="HOGENOM" id="CLU_060138_0_0_1"/>
<dbReference type="InParanoid" id="P53951"/>
<dbReference type="OMA" id="YFWRTLA"/>
<dbReference type="OrthoDB" id="18786at2759"/>
<dbReference type="BioCyc" id="YEAST:G3O-33084-MONOMER"/>
<dbReference type="BioGRID-ORCS" id="855676">
    <property type="hits" value="0 hits in 10 CRISPR screens"/>
</dbReference>
<dbReference type="PRO" id="PR:P53951"/>
<dbReference type="Proteomes" id="UP000002311">
    <property type="component" value="Chromosome XIV"/>
</dbReference>
<dbReference type="RNAct" id="P53951">
    <property type="molecule type" value="protein"/>
</dbReference>
<dbReference type="GO" id="GO:0005829">
    <property type="term" value="C:cytosol"/>
    <property type="evidence" value="ECO:0007005"/>
    <property type="project" value="SGD"/>
</dbReference>
<dbReference type="GO" id="GO:0000139">
    <property type="term" value="C:Golgi membrane"/>
    <property type="evidence" value="ECO:0000303"/>
    <property type="project" value="ComplexPortal"/>
</dbReference>
<dbReference type="GO" id="GO:0017119">
    <property type="term" value="C:Golgi transport complex"/>
    <property type="evidence" value="ECO:0000315"/>
    <property type="project" value="SGD"/>
</dbReference>
<dbReference type="GO" id="GO:0042802">
    <property type="term" value="F:identical protein binding"/>
    <property type="evidence" value="ECO:0000353"/>
    <property type="project" value="IntAct"/>
</dbReference>
<dbReference type="GO" id="GO:0032258">
    <property type="term" value="P:cytoplasm to vacuole targeting by the Cvt pathway"/>
    <property type="evidence" value="ECO:0000315"/>
    <property type="project" value="SGD"/>
</dbReference>
<dbReference type="GO" id="GO:0006891">
    <property type="term" value="P:intra-Golgi vesicle-mediated transport"/>
    <property type="evidence" value="ECO:0000315"/>
    <property type="project" value="SGD"/>
</dbReference>
<dbReference type="GO" id="GO:0000301">
    <property type="term" value="P:retrograde transport, vesicle recycling within Golgi"/>
    <property type="evidence" value="ECO:0000303"/>
    <property type="project" value="ComplexPortal"/>
</dbReference>
<dbReference type="InterPro" id="IPR019465">
    <property type="entry name" value="Cog5"/>
</dbReference>
<dbReference type="InterPro" id="IPR048485">
    <property type="entry name" value="COG5_helical"/>
</dbReference>
<dbReference type="InterPro" id="IPR049176">
    <property type="entry name" value="COG5_N"/>
</dbReference>
<dbReference type="PANTHER" id="PTHR13228">
    <property type="entry name" value="CONSERVED OLIGOMERIC GOLGI COMPLEX COMPONENT 5"/>
    <property type="match status" value="1"/>
</dbReference>
<dbReference type="PANTHER" id="PTHR13228:SF3">
    <property type="entry name" value="CONSERVED OLIGOMERIC GOLGI COMPLEX SUBUNIT 5"/>
    <property type="match status" value="1"/>
</dbReference>
<dbReference type="Pfam" id="PF20649">
    <property type="entry name" value="COG5_C"/>
    <property type="match status" value="1"/>
</dbReference>
<dbReference type="Pfam" id="PF10392">
    <property type="entry name" value="COG5_N"/>
    <property type="match status" value="1"/>
</dbReference>
<evidence type="ECO:0000250" key="1">
    <source>
        <dbReference type="UniProtKB" id="Q9UP83"/>
    </source>
</evidence>
<evidence type="ECO:0000269" key="2">
    <source>
    </source>
</evidence>
<evidence type="ECO:0000269" key="3">
    <source>
    </source>
</evidence>
<evidence type="ECO:0000269" key="4">
    <source>
    </source>
</evidence>
<evidence type="ECO:0000305" key="5"/>
<comment type="function">
    <text evidence="2">Acts as a component of the peripheral membrane COG complex that is involved in intra-Golgi protein trafficking. COG is located at the cis-Golgi, and regulates tethering of retrograde intra-Golgi vesicles and possibly a number of other membrane trafficking events.</text>
</comment>
<comment type="subunit">
    <text evidence="2 4">Component of the conserved oligomeric Golgi (COG or Sec34/Sec35) complex which consists of eight different proteins COG1-COG8.</text>
</comment>
<comment type="interaction">
    <interactant intactId="EBI-4841">
        <id>P53951</id>
    </interactant>
    <interactant intactId="EBI-4835">
        <id>P53079</id>
        <label>COG1</label>
    </interactant>
    <organismsDiffer>false</organismsDiffer>
    <experiments>7</experiments>
</comment>
<comment type="interaction">
    <interactant intactId="EBI-4841">
        <id>P53951</id>
    </interactant>
    <interactant intactId="EBI-16614">
        <id>P53271</id>
        <label>COG2</label>
    </interactant>
    <organismsDiffer>false</organismsDiffer>
    <experiments>3</experiments>
</comment>
<comment type="interaction">
    <interactant intactId="EBI-4841">
        <id>P53951</id>
    </interactant>
    <interactant intactId="EBI-16605">
        <id>P40094</id>
        <label>COG3</label>
    </interactant>
    <organismsDiffer>false</organismsDiffer>
    <experiments>4</experiments>
</comment>
<comment type="interaction">
    <interactant intactId="EBI-4841">
        <id>P53951</id>
    </interactant>
    <interactant intactId="EBI-4823">
        <id>Q06096</id>
        <label>COG4</label>
    </interactant>
    <organismsDiffer>false</organismsDiffer>
    <experiments>5</experiments>
</comment>
<comment type="interaction">
    <interactant intactId="EBI-4841">
        <id>P53951</id>
    </interactant>
    <interactant intactId="EBI-4841">
        <id>P53951</id>
        <label>COG5</label>
    </interactant>
    <organismsDiffer>false</organismsDiffer>
    <experiments>2</experiments>
</comment>
<comment type="interaction">
    <interactant intactId="EBI-4841">
        <id>P53951</id>
    </interactant>
    <interactant intactId="EBI-4829">
        <id>P53959</id>
        <label>COG6</label>
    </interactant>
    <organismsDiffer>false</organismsDiffer>
    <experiments>3</experiments>
</comment>
<comment type="interaction">
    <interactant intactId="EBI-4841">
        <id>P53951</id>
    </interactant>
    <interactant intactId="EBI-4847">
        <id>P53195</id>
        <label>COG7</label>
    </interactant>
    <organismsDiffer>false</organismsDiffer>
    <experiments>7</experiments>
</comment>
<comment type="interaction">
    <interactant intactId="EBI-4841">
        <id>P53951</id>
    </interactant>
    <interactant intactId="EBI-6035">
        <id>Q04632</id>
        <label>COG8</label>
    </interactant>
    <organismsDiffer>false</organismsDiffer>
    <experiments>4</experiments>
</comment>
<comment type="subcellular location">
    <subcellularLocation>
        <location evidence="1">Golgi apparatus membrane</location>
        <topology evidence="1">Peripheral membrane protein</topology>
    </subcellularLocation>
</comment>
<comment type="miscellaneous">
    <text evidence="3">Present with 468 molecules/cell in log phase SD medium.</text>
</comment>
<comment type="similarity">
    <text evidence="5">Belongs to the COG5 family.</text>
</comment>
<gene>
    <name type="primary">COG5</name>
    <name type="synonym">COD4</name>
    <name type="ordered locus">YNL051W</name>
    <name type="ORF">N2476</name>
    <name type="ORF">YNL2476W</name>
</gene>
<feature type="chain" id="PRO_0000213512" description="Conserved oligomeric Golgi complex subunit 5">
    <location>
        <begin position="1"/>
        <end position="403"/>
    </location>
</feature>